<organism>
    <name type="scientific">Geobacillus sp. (strain WCH70)</name>
    <dbReference type="NCBI Taxonomy" id="471223"/>
    <lineage>
        <taxon>Bacteria</taxon>
        <taxon>Bacillati</taxon>
        <taxon>Bacillota</taxon>
        <taxon>Bacilli</taxon>
        <taxon>Bacillales</taxon>
        <taxon>Anoxybacillaceae</taxon>
        <taxon>Geobacillus</taxon>
    </lineage>
</organism>
<sequence length="198" mass="22187">MHYPEPISKLIDSFMKLPGIGPKTAIRLAFFVLTMKEDTVLEFAKSLVDVKRNIRYCTVCGHITDTDPCYICKDERRDRTTICVVQDPKDVIAMEKMKEYNGLYHVLHGAISPMEGIGPEDIKIAELLKRLQDEAVQEVILATNPNIEGEATAMYISRLLKPTGIKVTRIAHGLPVGGDLEYADEVTLSKALEGRREL</sequence>
<accession>C5D347</accession>
<dbReference type="EMBL" id="CP001638">
    <property type="protein sequence ID" value="ACS22963.1"/>
    <property type="molecule type" value="Genomic_DNA"/>
</dbReference>
<dbReference type="SMR" id="C5D347"/>
<dbReference type="STRING" id="471223.GWCH70_0021"/>
<dbReference type="KEGG" id="gwc:GWCH70_0021"/>
<dbReference type="eggNOG" id="COG0353">
    <property type="taxonomic scope" value="Bacteria"/>
</dbReference>
<dbReference type="HOGENOM" id="CLU_060739_1_0_9"/>
<dbReference type="OrthoDB" id="9802672at2"/>
<dbReference type="GO" id="GO:0003677">
    <property type="term" value="F:DNA binding"/>
    <property type="evidence" value="ECO:0007669"/>
    <property type="project" value="UniProtKB-UniRule"/>
</dbReference>
<dbReference type="GO" id="GO:0008270">
    <property type="term" value="F:zinc ion binding"/>
    <property type="evidence" value="ECO:0007669"/>
    <property type="project" value="UniProtKB-KW"/>
</dbReference>
<dbReference type="GO" id="GO:0006310">
    <property type="term" value="P:DNA recombination"/>
    <property type="evidence" value="ECO:0007669"/>
    <property type="project" value="UniProtKB-UniRule"/>
</dbReference>
<dbReference type="GO" id="GO:0006281">
    <property type="term" value="P:DNA repair"/>
    <property type="evidence" value="ECO:0007669"/>
    <property type="project" value="UniProtKB-UniRule"/>
</dbReference>
<dbReference type="CDD" id="cd01025">
    <property type="entry name" value="TOPRIM_recR"/>
    <property type="match status" value="1"/>
</dbReference>
<dbReference type="Gene3D" id="3.30.60.80">
    <property type="match status" value="1"/>
</dbReference>
<dbReference type="Gene3D" id="3.40.1360.10">
    <property type="match status" value="1"/>
</dbReference>
<dbReference type="Gene3D" id="6.10.250.240">
    <property type="match status" value="1"/>
</dbReference>
<dbReference type="Gene3D" id="1.10.8.420">
    <property type="entry name" value="RecR Domain 1"/>
    <property type="match status" value="1"/>
</dbReference>
<dbReference type="HAMAP" id="MF_00017">
    <property type="entry name" value="RecR"/>
    <property type="match status" value="1"/>
</dbReference>
<dbReference type="InterPro" id="IPR000093">
    <property type="entry name" value="DNA_Rcmb_RecR"/>
</dbReference>
<dbReference type="InterPro" id="IPR023627">
    <property type="entry name" value="Rcmb_RecR"/>
</dbReference>
<dbReference type="InterPro" id="IPR015967">
    <property type="entry name" value="Rcmb_RecR_Znf"/>
</dbReference>
<dbReference type="InterPro" id="IPR006171">
    <property type="entry name" value="TOPRIM_dom"/>
</dbReference>
<dbReference type="InterPro" id="IPR034137">
    <property type="entry name" value="TOPRIM_RecR"/>
</dbReference>
<dbReference type="NCBIfam" id="TIGR00615">
    <property type="entry name" value="recR"/>
    <property type="match status" value="1"/>
</dbReference>
<dbReference type="PANTHER" id="PTHR30446">
    <property type="entry name" value="RECOMBINATION PROTEIN RECR"/>
    <property type="match status" value="1"/>
</dbReference>
<dbReference type="PANTHER" id="PTHR30446:SF0">
    <property type="entry name" value="RECOMBINATION PROTEIN RECR"/>
    <property type="match status" value="1"/>
</dbReference>
<dbReference type="Pfam" id="PF21175">
    <property type="entry name" value="RecR_C"/>
    <property type="match status" value="1"/>
</dbReference>
<dbReference type="Pfam" id="PF21176">
    <property type="entry name" value="RecR_HhH"/>
    <property type="match status" value="1"/>
</dbReference>
<dbReference type="Pfam" id="PF02132">
    <property type="entry name" value="RecR_ZnF"/>
    <property type="match status" value="1"/>
</dbReference>
<dbReference type="Pfam" id="PF13662">
    <property type="entry name" value="Toprim_4"/>
    <property type="match status" value="1"/>
</dbReference>
<dbReference type="SMART" id="SM00493">
    <property type="entry name" value="TOPRIM"/>
    <property type="match status" value="1"/>
</dbReference>
<dbReference type="SUPFAM" id="SSF111304">
    <property type="entry name" value="Recombination protein RecR"/>
    <property type="match status" value="1"/>
</dbReference>
<dbReference type="PROSITE" id="PS01300">
    <property type="entry name" value="RECR"/>
    <property type="match status" value="1"/>
</dbReference>
<dbReference type="PROSITE" id="PS50880">
    <property type="entry name" value="TOPRIM"/>
    <property type="match status" value="1"/>
</dbReference>
<reference key="1">
    <citation type="submission" date="2009-06" db="EMBL/GenBank/DDBJ databases">
        <title>Complete sequence of chromosome of Geopacillus sp. WCH70.</title>
        <authorList>
            <consortium name="US DOE Joint Genome Institute"/>
            <person name="Lucas S."/>
            <person name="Copeland A."/>
            <person name="Lapidus A."/>
            <person name="Glavina del Rio T."/>
            <person name="Dalin E."/>
            <person name="Tice H."/>
            <person name="Bruce D."/>
            <person name="Goodwin L."/>
            <person name="Pitluck S."/>
            <person name="Chertkov O."/>
            <person name="Brettin T."/>
            <person name="Detter J.C."/>
            <person name="Han C."/>
            <person name="Larimer F."/>
            <person name="Land M."/>
            <person name="Hauser L."/>
            <person name="Kyrpides N."/>
            <person name="Mikhailova N."/>
            <person name="Brumm P."/>
            <person name="Mead D.A."/>
            <person name="Richardson P."/>
        </authorList>
    </citation>
    <scope>NUCLEOTIDE SEQUENCE [LARGE SCALE GENOMIC DNA]</scope>
    <source>
        <strain>WCH70</strain>
    </source>
</reference>
<evidence type="ECO:0000255" key="1">
    <source>
        <dbReference type="HAMAP-Rule" id="MF_00017"/>
    </source>
</evidence>
<gene>
    <name evidence="1" type="primary">recR</name>
    <name type="ordered locus">GWCH70_0021</name>
</gene>
<keyword id="KW-0227">DNA damage</keyword>
<keyword id="KW-0233">DNA recombination</keyword>
<keyword id="KW-0234">DNA repair</keyword>
<keyword id="KW-0479">Metal-binding</keyword>
<keyword id="KW-0862">Zinc</keyword>
<keyword id="KW-0863">Zinc-finger</keyword>
<comment type="function">
    <text evidence="1">May play a role in DNA repair. It seems to be involved in an RecBC-independent recombinational process of DNA repair. It may act with RecF and RecO.</text>
</comment>
<comment type="similarity">
    <text evidence="1">Belongs to the RecR family.</text>
</comment>
<name>RECR_GEOSW</name>
<protein>
    <recommendedName>
        <fullName evidence="1">Recombination protein RecR</fullName>
    </recommendedName>
</protein>
<feature type="chain" id="PRO_1000201863" description="Recombination protein RecR">
    <location>
        <begin position="1"/>
        <end position="198"/>
    </location>
</feature>
<feature type="domain" description="Toprim" evidence="1">
    <location>
        <begin position="80"/>
        <end position="175"/>
    </location>
</feature>
<feature type="zinc finger region" description="C4-type" evidence="1">
    <location>
        <begin position="57"/>
        <end position="72"/>
    </location>
</feature>
<proteinExistence type="inferred from homology"/>